<protein>
    <recommendedName>
        <fullName>Cytochrome b</fullName>
    </recommendedName>
    <alternativeName>
        <fullName>Complex III subunit 3</fullName>
    </alternativeName>
    <alternativeName>
        <fullName>Complex III subunit III</fullName>
    </alternativeName>
    <alternativeName>
        <fullName>Cytochrome b-c1 complex subunit 3</fullName>
    </alternativeName>
    <alternativeName>
        <fullName>Ubiquinol-cytochrome-c reductase complex cytochrome b subunit</fullName>
    </alternativeName>
</protein>
<dbReference type="EMBL" id="AB085737">
    <property type="protein sequence ID" value="BAC16631.1"/>
    <property type="molecule type" value="Genomic_DNA"/>
</dbReference>
<dbReference type="EMBL" id="AB106607">
    <property type="protein sequence ID" value="BAC77813.1"/>
    <property type="molecule type" value="Genomic_DNA"/>
</dbReference>
<dbReference type="SMR" id="Q8HQE7"/>
<dbReference type="GO" id="GO:0005743">
    <property type="term" value="C:mitochondrial inner membrane"/>
    <property type="evidence" value="ECO:0007669"/>
    <property type="project" value="UniProtKB-SubCell"/>
</dbReference>
<dbReference type="GO" id="GO:0045275">
    <property type="term" value="C:respiratory chain complex III"/>
    <property type="evidence" value="ECO:0007669"/>
    <property type="project" value="InterPro"/>
</dbReference>
<dbReference type="GO" id="GO:0046872">
    <property type="term" value="F:metal ion binding"/>
    <property type="evidence" value="ECO:0007669"/>
    <property type="project" value="UniProtKB-KW"/>
</dbReference>
<dbReference type="GO" id="GO:0008121">
    <property type="term" value="F:ubiquinol-cytochrome-c reductase activity"/>
    <property type="evidence" value="ECO:0007669"/>
    <property type="project" value="InterPro"/>
</dbReference>
<dbReference type="GO" id="GO:0006122">
    <property type="term" value="P:mitochondrial electron transport, ubiquinol to cytochrome c"/>
    <property type="evidence" value="ECO:0007669"/>
    <property type="project" value="TreeGrafter"/>
</dbReference>
<dbReference type="CDD" id="cd00290">
    <property type="entry name" value="cytochrome_b_C"/>
    <property type="match status" value="1"/>
</dbReference>
<dbReference type="CDD" id="cd00284">
    <property type="entry name" value="Cytochrome_b_N"/>
    <property type="match status" value="1"/>
</dbReference>
<dbReference type="FunFam" id="1.20.810.10:FF:000002">
    <property type="entry name" value="Cytochrome b"/>
    <property type="match status" value="1"/>
</dbReference>
<dbReference type="Gene3D" id="1.20.810.10">
    <property type="entry name" value="Cytochrome Bc1 Complex, Chain C"/>
    <property type="match status" value="1"/>
</dbReference>
<dbReference type="InterPro" id="IPR005798">
    <property type="entry name" value="Cyt_b/b6_C"/>
</dbReference>
<dbReference type="InterPro" id="IPR036150">
    <property type="entry name" value="Cyt_b/b6_C_sf"/>
</dbReference>
<dbReference type="InterPro" id="IPR005797">
    <property type="entry name" value="Cyt_b/b6_N"/>
</dbReference>
<dbReference type="InterPro" id="IPR027387">
    <property type="entry name" value="Cytb/b6-like_sf"/>
</dbReference>
<dbReference type="InterPro" id="IPR030689">
    <property type="entry name" value="Cytochrome_b"/>
</dbReference>
<dbReference type="InterPro" id="IPR048260">
    <property type="entry name" value="Cytochrome_b_C_euk/bac"/>
</dbReference>
<dbReference type="InterPro" id="IPR048259">
    <property type="entry name" value="Cytochrome_b_N_euk/bac"/>
</dbReference>
<dbReference type="InterPro" id="IPR016174">
    <property type="entry name" value="Di-haem_cyt_TM"/>
</dbReference>
<dbReference type="PANTHER" id="PTHR19271">
    <property type="entry name" value="CYTOCHROME B"/>
    <property type="match status" value="1"/>
</dbReference>
<dbReference type="PANTHER" id="PTHR19271:SF16">
    <property type="entry name" value="CYTOCHROME B"/>
    <property type="match status" value="1"/>
</dbReference>
<dbReference type="Pfam" id="PF00032">
    <property type="entry name" value="Cytochrom_B_C"/>
    <property type="match status" value="1"/>
</dbReference>
<dbReference type="Pfam" id="PF00033">
    <property type="entry name" value="Cytochrome_B"/>
    <property type="match status" value="1"/>
</dbReference>
<dbReference type="PIRSF" id="PIRSF038885">
    <property type="entry name" value="COB"/>
    <property type="match status" value="1"/>
</dbReference>
<dbReference type="SUPFAM" id="SSF81648">
    <property type="entry name" value="a domain/subunit of cytochrome bc1 complex (Ubiquinol-cytochrome c reductase)"/>
    <property type="match status" value="1"/>
</dbReference>
<dbReference type="SUPFAM" id="SSF81342">
    <property type="entry name" value="Transmembrane di-heme cytochromes"/>
    <property type="match status" value="1"/>
</dbReference>
<dbReference type="PROSITE" id="PS51003">
    <property type="entry name" value="CYTB_CTER"/>
    <property type="match status" value="1"/>
</dbReference>
<dbReference type="PROSITE" id="PS51002">
    <property type="entry name" value="CYTB_NTER"/>
    <property type="match status" value="1"/>
</dbReference>
<accession>Q8HQE7</accession>
<accession>Q7Y8L1</accession>
<comment type="function">
    <text evidence="2">Component of the ubiquinol-cytochrome c reductase complex (complex III or cytochrome b-c1 complex) that is part of the mitochondrial respiratory chain. The b-c1 complex mediates electron transfer from ubiquinol to cytochrome c. Contributes to the generation of a proton gradient across the mitochondrial membrane that is then used for ATP synthesis.</text>
</comment>
<comment type="cofactor">
    <cofactor evidence="2">
        <name>heme b</name>
        <dbReference type="ChEBI" id="CHEBI:60344"/>
    </cofactor>
    <text evidence="2">Binds 2 heme b groups non-covalently.</text>
</comment>
<comment type="subunit">
    <text evidence="2">The cytochrome bc1 complex contains 11 subunits: 3 respiratory subunits (MT-CYB, CYC1 and UQCRFS1), 2 core proteins (UQCRC1 and UQCRC2) and 6 low-molecular weight proteins (UQCRH/QCR6, UQCRB/QCR7, UQCRQ/QCR8, UQCR10/QCR9, UQCR11/QCR10 and a cleavage product of UQCRFS1). This cytochrome bc1 complex then forms a dimer.</text>
</comment>
<comment type="subcellular location">
    <subcellularLocation>
        <location evidence="2">Mitochondrion inner membrane</location>
        <topology evidence="2">Multi-pass membrane protein</topology>
    </subcellularLocation>
</comment>
<comment type="miscellaneous">
    <text evidence="1">Heme 1 (or BL or b562) is low-potential and absorbs at about 562 nm, and heme 2 (or BH or b566) is high-potential and absorbs at about 566 nm.</text>
</comment>
<comment type="similarity">
    <text evidence="3 4">Belongs to the cytochrome b family.</text>
</comment>
<comment type="caution">
    <text evidence="2">The full-length protein contains only eight transmembrane helices, not nine as predicted by bioinformatics tools.</text>
</comment>
<geneLocation type="mitochondrion"/>
<organism>
    <name type="scientific">Myotis pruinosus</name>
    <name type="common">Black whiskered bat</name>
    <name type="synonym">Frosted myotis</name>
    <dbReference type="NCBI Taxonomy" id="196298"/>
    <lineage>
        <taxon>Eukaryota</taxon>
        <taxon>Metazoa</taxon>
        <taxon>Chordata</taxon>
        <taxon>Craniata</taxon>
        <taxon>Vertebrata</taxon>
        <taxon>Euteleostomi</taxon>
        <taxon>Mammalia</taxon>
        <taxon>Eutheria</taxon>
        <taxon>Laurasiatheria</taxon>
        <taxon>Chiroptera</taxon>
        <taxon>Yangochiroptera</taxon>
        <taxon>Vespertilionidae</taxon>
        <taxon>Myotis</taxon>
    </lineage>
</organism>
<proteinExistence type="inferred from homology"/>
<reference key="1">
    <citation type="journal article" date="2003" name="Genes Genet. Syst.">
        <title>Molecular phylogeny of Japanese Rhinolophidae based on variations in the complete sequence of the mitochondrial cytochrome b gene.</title>
        <authorList>
            <person name="Sakai T."/>
            <person name="Kikkawa Y."/>
            <person name="Tuchiya K."/>
            <person name="Harada M."/>
            <person name="Kanoe M."/>
            <person name="Yoshiyuki M."/>
            <person name="Yonekawa H."/>
        </authorList>
    </citation>
    <scope>NUCLEOTIDE SEQUENCE [GENOMIC DNA]</scope>
</reference>
<reference key="2">
    <citation type="journal article" date="2003" name="Mol. Phylogenet. Evol.">
        <title>The status of the Japanese and East Asian bats of the genus Myotis (Vespertilionidae) based on mitochondrial sequences.</title>
        <authorList>
            <person name="Kawai K."/>
            <person name="Nikaido M."/>
            <person name="Harada M."/>
            <person name="Matsumura S."/>
            <person name="Lin L."/>
            <person name="Wu Y."/>
            <person name="Hasegawa M."/>
            <person name="Okada N."/>
        </authorList>
    </citation>
    <scope>NUCLEOTIDE SEQUENCE [GENOMIC DNA]</scope>
</reference>
<evidence type="ECO:0000250" key="1"/>
<evidence type="ECO:0000250" key="2">
    <source>
        <dbReference type="UniProtKB" id="P00157"/>
    </source>
</evidence>
<evidence type="ECO:0000255" key="3">
    <source>
        <dbReference type="PROSITE-ProRule" id="PRU00967"/>
    </source>
</evidence>
<evidence type="ECO:0000255" key="4">
    <source>
        <dbReference type="PROSITE-ProRule" id="PRU00968"/>
    </source>
</evidence>
<evidence type="ECO:0000305" key="5"/>
<name>CYB_MYOPR</name>
<keyword id="KW-0249">Electron transport</keyword>
<keyword id="KW-0349">Heme</keyword>
<keyword id="KW-0408">Iron</keyword>
<keyword id="KW-0472">Membrane</keyword>
<keyword id="KW-0479">Metal-binding</keyword>
<keyword id="KW-0496">Mitochondrion</keyword>
<keyword id="KW-0999">Mitochondrion inner membrane</keyword>
<keyword id="KW-0679">Respiratory chain</keyword>
<keyword id="KW-0812">Transmembrane</keyword>
<keyword id="KW-1133">Transmembrane helix</keyword>
<keyword id="KW-0813">Transport</keyword>
<keyword id="KW-0830">Ubiquinone</keyword>
<gene>
    <name type="primary">MT-CYB</name>
    <name type="synonym">COB</name>
    <name type="synonym">CYTB</name>
    <name type="synonym">MTCYB</name>
</gene>
<sequence>MTNIRKSHPLMKIINNSFIDLPAPSNISSWWNFGSLLGICLALQILTGLFLAMHYTSDTATAFNSVTHICRDVNYGWILRYLHANGASMFFICLYLHVGRGLYYGSYMYMETWNIGVILLFAVMATAFMGYVLPWGQMSFWGATVITNLLSAIPYIGTNLVEWIWGGFSVDKATLTRFFAFHFLLPFIIAAMVMVHLLFLHETGSNNPTGIPSNADMIPFHPYYTINDILGLLLMIMTLLMLVLFSPDMLGDPDNYTPANPLSTPPHIKPEWYFLFAYAILRSIPNKLGGVLALVLSILILIIIPLLHTSKQRSMSFRPLSQCLFWLLTADLLTLTWIGGQPVEHPYILIGQLASILYFSIIIIFMPLTSLMENHLLKW</sequence>
<feature type="chain" id="PRO_0000061250" description="Cytochrome b">
    <location>
        <begin position="1"/>
        <end position="379"/>
    </location>
</feature>
<feature type="transmembrane region" description="Helical" evidence="2">
    <location>
        <begin position="33"/>
        <end position="53"/>
    </location>
</feature>
<feature type="transmembrane region" description="Helical" evidence="2">
    <location>
        <begin position="77"/>
        <end position="98"/>
    </location>
</feature>
<feature type="transmembrane region" description="Helical" evidence="2">
    <location>
        <begin position="113"/>
        <end position="133"/>
    </location>
</feature>
<feature type="transmembrane region" description="Helical" evidence="2">
    <location>
        <begin position="178"/>
        <end position="198"/>
    </location>
</feature>
<feature type="transmembrane region" description="Helical" evidence="2">
    <location>
        <begin position="226"/>
        <end position="246"/>
    </location>
</feature>
<feature type="transmembrane region" description="Helical" evidence="2">
    <location>
        <begin position="288"/>
        <end position="308"/>
    </location>
</feature>
<feature type="transmembrane region" description="Helical" evidence="2">
    <location>
        <begin position="320"/>
        <end position="340"/>
    </location>
</feature>
<feature type="transmembrane region" description="Helical" evidence="2">
    <location>
        <begin position="347"/>
        <end position="367"/>
    </location>
</feature>
<feature type="binding site" description="axial binding residue" evidence="2">
    <location>
        <position position="83"/>
    </location>
    <ligand>
        <name>heme b</name>
        <dbReference type="ChEBI" id="CHEBI:60344"/>
        <label>b562</label>
    </ligand>
    <ligandPart>
        <name>Fe</name>
        <dbReference type="ChEBI" id="CHEBI:18248"/>
    </ligandPart>
</feature>
<feature type="binding site" description="axial binding residue" evidence="2">
    <location>
        <position position="97"/>
    </location>
    <ligand>
        <name>heme b</name>
        <dbReference type="ChEBI" id="CHEBI:60344"/>
        <label>b566</label>
    </ligand>
    <ligandPart>
        <name>Fe</name>
        <dbReference type="ChEBI" id="CHEBI:18248"/>
    </ligandPart>
</feature>
<feature type="binding site" description="axial binding residue" evidence="2">
    <location>
        <position position="182"/>
    </location>
    <ligand>
        <name>heme b</name>
        <dbReference type="ChEBI" id="CHEBI:60344"/>
        <label>b562</label>
    </ligand>
    <ligandPart>
        <name>Fe</name>
        <dbReference type="ChEBI" id="CHEBI:18248"/>
    </ligandPart>
</feature>
<feature type="binding site" description="axial binding residue" evidence="2">
    <location>
        <position position="196"/>
    </location>
    <ligand>
        <name>heme b</name>
        <dbReference type="ChEBI" id="CHEBI:60344"/>
        <label>b566</label>
    </ligand>
    <ligandPart>
        <name>Fe</name>
        <dbReference type="ChEBI" id="CHEBI:18248"/>
    </ligandPart>
</feature>
<feature type="binding site" evidence="2">
    <location>
        <position position="201"/>
    </location>
    <ligand>
        <name>a ubiquinone</name>
        <dbReference type="ChEBI" id="CHEBI:16389"/>
    </ligand>
</feature>
<feature type="sequence conflict" description="In Ref. 2; BAC77813." evidence="5" ref="2">
    <original>A</original>
    <variation>T</variation>
    <location>
        <position position="122"/>
    </location>
</feature>
<feature type="sequence conflict" description="In Ref. 2; BAC77813." evidence="5" ref="2">
    <original>N</original>
    <variation>K</variation>
    <location>
        <position position="227"/>
    </location>
</feature>
<feature type="sequence conflict" description="In Ref. 2; BAC77813." evidence="5" ref="2">
    <original>M</original>
    <variation>V</variation>
    <location>
        <position position="372"/>
    </location>
</feature>